<sequence>MSTAKLVKTKASNLLYTRNDVSESDKKATVELLNRQVIQFIDLSLITKQAHWNMRGANFIAVHEMLDGFRTALTDHLDTMAERAVQLGGVALGTTQVINSKTPLKSYPLDIHNVQDHLKELADRYAVVANDVRKAIGEAKDEDTADIFTAASRDLDKFLWFIESNIE</sequence>
<protein>
    <recommendedName>
        <fullName evidence="1">DNA protection during starvation protein</fullName>
        <ecNumber evidence="1">1.16.-.-</ecNumber>
    </recommendedName>
</protein>
<dbReference type="EC" id="1.16.-.-" evidence="1"/>
<dbReference type="EMBL" id="CP001120">
    <property type="protein sequence ID" value="ACF68621.1"/>
    <property type="molecule type" value="Genomic_DNA"/>
</dbReference>
<dbReference type="RefSeq" id="WP_000100805.1">
    <property type="nucleotide sequence ID" value="NC_011083.1"/>
</dbReference>
<dbReference type="SMR" id="B4TC86"/>
<dbReference type="KEGG" id="seh:SeHA_C0959"/>
<dbReference type="HOGENOM" id="CLU_098183_1_2_6"/>
<dbReference type="Proteomes" id="UP000001866">
    <property type="component" value="Chromosome"/>
</dbReference>
<dbReference type="GO" id="GO:0005737">
    <property type="term" value="C:cytoplasm"/>
    <property type="evidence" value="ECO:0007669"/>
    <property type="project" value="UniProtKB-SubCell"/>
</dbReference>
<dbReference type="GO" id="GO:0003677">
    <property type="term" value="F:DNA binding"/>
    <property type="evidence" value="ECO:0007669"/>
    <property type="project" value="UniProtKB-UniRule"/>
</dbReference>
<dbReference type="GO" id="GO:0008199">
    <property type="term" value="F:ferric iron binding"/>
    <property type="evidence" value="ECO:0007669"/>
    <property type="project" value="UniProtKB-UniRule"/>
</dbReference>
<dbReference type="GO" id="GO:0016722">
    <property type="term" value="F:oxidoreductase activity, acting on metal ions"/>
    <property type="evidence" value="ECO:0007669"/>
    <property type="project" value="InterPro"/>
</dbReference>
<dbReference type="GO" id="GO:0030261">
    <property type="term" value="P:chromosome condensation"/>
    <property type="evidence" value="ECO:0007669"/>
    <property type="project" value="UniProtKB-KW"/>
</dbReference>
<dbReference type="GO" id="GO:0006879">
    <property type="term" value="P:intracellular iron ion homeostasis"/>
    <property type="evidence" value="ECO:0007669"/>
    <property type="project" value="UniProtKB-KW"/>
</dbReference>
<dbReference type="CDD" id="cd01043">
    <property type="entry name" value="DPS"/>
    <property type="match status" value="1"/>
</dbReference>
<dbReference type="FunFam" id="1.20.1260.10:FF:000003">
    <property type="entry name" value="DNA protection during starvation protein"/>
    <property type="match status" value="1"/>
</dbReference>
<dbReference type="Gene3D" id="1.20.1260.10">
    <property type="match status" value="1"/>
</dbReference>
<dbReference type="HAMAP" id="MF_01441">
    <property type="entry name" value="Dps"/>
    <property type="match status" value="1"/>
</dbReference>
<dbReference type="InterPro" id="IPR002177">
    <property type="entry name" value="DPS_DNA-bd"/>
</dbReference>
<dbReference type="InterPro" id="IPR023188">
    <property type="entry name" value="DPS_DNA-bd_CS"/>
</dbReference>
<dbReference type="InterPro" id="IPR023067">
    <property type="entry name" value="Dps_gammaproteobac"/>
</dbReference>
<dbReference type="InterPro" id="IPR012347">
    <property type="entry name" value="Ferritin-like"/>
</dbReference>
<dbReference type="InterPro" id="IPR009078">
    <property type="entry name" value="Ferritin-like_SF"/>
</dbReference>
<dbReference type="InterPro" id="IPR008331">
    <property type="entry name" value="Ferritin_DPS_dom"/>
</dbReference>
<dbReference type="NCBIfam" id="NF006975">
    <property type="entry name" value="PRK09448.1"/>
    <property type="match status" value="1"/>
</dbReference>
<dbReference type="PANTHER" id="PTHR42932:SF3">
    <property type="entry name" value="DNA PROTECTION DURING STARVATION PROTEIN"/>
    <property type="match status" value="1"/>
</dbReference>
<dbReference type="PANTHER" id="PTHR42932">
    <property type="entry name" value="GENERAL STRESS PROTEIN 20U"/>
    <property type="match status" value="1"/>
</dbReference>
<dbReference type="Pfam" id="PF00210">
    <property type="entry name" value="Ferritin"/>
    <property type="match status" value="1"/>
</dbReference>
<dbReference type="PIRSF" id="PIRSF005900">
    <property type="entry name" value="Dps"/>
    <property type="match status" value="1"/>
</dbReference>
<dbReference type="PRINTS" id="PR01346">
    <property type="entry name" value="HELNAPAPROT"/>
</dbReference>
<dbReference type="SUPFAM" id="SSF47240">
    <property type="entry name" value="Ferritin-like"/>
    <property type="match status" value="1"/>
</dbReference>
<dbReference type="PROSITE" id="PS00818">
    <property type="entry name" value="DPS_1"/>
    <property type="match status" value="1"/>
</dbReference>
<dbReference type="PROSITE" id="PS00819">
    <property type="entry name" value="DPS_2"/>
    <property type="match status" value="1"/>
</dbReference>
<feature type="chain" id="PRO_1000145913" description="DNA protection during starvation protein">
    <location>
        <begin position="1"/>
        <end position="167"/>
    </location>
</feature>
<feature type="binding site" evidence="1">
    <location>
        <position position="51"/>
    </location>
    <ligand>
        <name>Fe cation</name>
        <dbReference type="ChEBI" id="CHEBI:24875"/>
    </ligand>
</feature>
<feature type="binding site" evidence="1">
    <location>
        <position position="78"/>
    </location>
    <ligand>
        <name>Fe cation</name>
        <dbReference type="ChEBI" id="CHEBI:24875"/>
    </ligand>
</feature>
<feature type="binding site" evidence="1">
    <location>
        <position position="82"/>
    </location>
    <ligand>
        <name>Fe cation</name>
        <dbReference type="ChEBI" id="CHEBI:24875"/>
    </ligand>
</feature>
<accession>B4TC86</accession>
<proteinExistence type="inferred from homology"/>
<organism>
    <name type="scientific">Salmonella heidelberg (strain SL476)</name>
    <dbReference type="NCBI Taxonomy" id="454169"/>
    <lineage>
        <taxon>Bacteria</taxon>
        <taxon>Pseudomonadati</taxon>
        <taxon>Pseudomonadota</taxon>
        <taxon>Gammaproteobacteria</taxon>
        <taxon>Enterobacterales</taxon>
        <taxon>Enterobacteriaceae</taxon>
        <taxon>Salmonella</taxon>
    </lineage>
</organism>
<gene>
    <name evidence="1" type="primary">dps</name>
    <name type="ordered locus">SeHA_C0959</name>
</gene>
<name>DPS_SALHS</name>
<evidence type="ECO:0000255" key="1">
    <source>
        <dbReference type="HAMAP-Rule" id="MF_01441"/>
    </source>
</evidence>
<comment type="function">
    <text evidence="1">During stationary phase, binds the chromosome non-specifically, forming a highly ordered and stable dps-DNA co-crystal within which chromosomal DNA is condensed and protected from diverse damages. It protects DNA from oxidative damage by sequestering intracellular Fe(2+) ion and storing it in the form of Fe(3+) oxyhydroxide mineral, which can be released after reduction. One hydrogen peroxide oxidizes two Fe(2+) ions, which prevents hydroxyl radical production by the Fenton reaction.</text>
</comment>
<comment type="catalytic activity">
    <reaction evidence="1">
        <text>2 Fe(2+) + H2O2 + 2 H(+) = 2 Fe(3+) + 2 H2O</text>
        <dbReference type="Rhea" id="RHEA:48712"/>
        <dbReference type="ChEBI" id="CHEBI:15377"/>
        <dbReference type="ChEBI" id="CHEBI:15378"/>
        <dbReference type="ChEBI" id="CHEBI:16240"/>
        <dbReference type="ChEBI" id="CHEBI:29033"/>
        <dbReference type="ChEBI" id="CHEBI:29034"/>
    </reaction>
</comment>
<comment type="subunit">
    <text evidence="1">Homododecamer. The 12 subunits form a hollow sphere into which the mineral iron core of up to 500 Fe(3+) can be deposited.</text>
</comment>
<comment type="subcellular location">
    <subcellularLocation>
        <location evidence="1">Cytoplasm</location>
    </subcellularLocation>
</comment>
<comment type="similarity">
    <text evidence="1">Belongs to the Dps family.</text>
</comment>
<keyword id="KW-0963">Cytoplasm</keyword>
<keyword id="KW-0226">DNA condensation</keyword>
<keyword id="KW-0238">DNA-binding</keyword>
<keyword id="KW-0408">Iron</keyword>
<keyword id="KW-0409">Iron storage</keyword>
<keyword id="KW-0479">Metal-binding</keyword>
<keyword id="KW-0560">Oxidoreductase</keyword>
<reference key="1">
    <citation type="journal article" date="2011" name="J. Bacteriol.">
        <title>Comparative genomics of 28 Salmonella enterica isolates: evidence for CRISPR-mediated adaptive sublineage evolution.</title>
        <authorList>
            <person name="Fricke W.F."/>
            <person name="Mammel M.K."/>
            <person name="McDermott P.F."/>
            <person name="Tartera C."/>
            <person name="White D.G."/>
            <person name="Leclerc J.E."/>
            <person name="Ravel J."/>
            <person name="Cebula T.A."/>
        </authorList>
    </citation>
    <scope>NUCLEOTIDE SEQUENCE [LARGE SCALE GENOMIC DNA]</scope>
    <source>
        <strain>SL476</strain>
    </source>
</reference>